<organism>
    <name type="scientific">Homo sapiens</name>
    <name type="common">Human</name>
    <dbReference type="NCBI Taxonomy" id="9606"/>
    <lineage>
        <taxon>Eukaryota</taxon>
        <taxon>Metazoa</taxon>
        <taxon>Chordata</taxon>
        <taxon>Craniata</taxon>
        <taxon>Vertebrata</taxon>
        <taxon>Euteleostomi</taxon>
        <taxon>Mammalia</taxon>
        <taxon>Eutheria</taxon>
        <taxon>Euarchontoglires</taxon>
        <taxon>Primates</taxon>
        <taxon>Haplorrhini</taxon>
        <taxon>Catarrhini</taxon>
        <taxon>Hominidae</taxon>
        <taxon>Homo</taxon>
    </lineage>
</organism>
<comment type="function">
    <text evidence="2 3">Chromosome cohesion factor involved in sister chromatid cohesion and fidelity of chromosome transmission. Component of one of the cell nuclear antigen loader complexes, CTF18-replication factor C (CTF18-RFC), which consists of CTF18, CTF8, DSCC1, RFC2, RFC3, RFC4 and RFC5. The CTF18-RFC complex binds to single-stranded and primed DNAs and has weak ATPase activity that is stimulated the presence of primed DNA, replication protein A (RPA) and proliferating cell nuclear antigen (PCNA). The CTF18-RFC complex catalyzes the ATP-dependent loading of PCNA onto primed and gapped DNA. It also interacts with and stimulates POLH, which is suggestive of a protein network that coordinates DNA repair, recombination and chromosome cohesion reactions with replication fork progression.</text>
</comment>
<comment type="subunit">
    <text evidence="1 2 3">Component of the CTF18-RFC complex, which consists of CTF18, CTF8, DSCC1, RFC2, RFC3, RFC4 and RFC5. The CTF18-RFC complex does not interact with the Rad9/Rad1/Hus1 complex. The CTF18-RFC complex interacts with POLH. CTF18/CTF8/DSCC1 associate with PCNA. CTF8 exists as a dimer with DSCC1.</text>
</comment>
<comment type="subcellular location">
    <subcellularLocation>
        <location evidence="1">Nucleus</location>
    </subcellularLocation>
    <text evidence="1">Associates with chromatin during S phase.</text>
</comment>
<comment type="similarity">
    <text evidence="5">Belongs to the CTF8 family.</text>
</comment>
<sequence length="121" mass="13314">MVQIVISSARAGGLAEWVLMELQGEIEARYSTGLAGNLLGDLHYTTEGIPVLIVGHHILYGKIIHLEKPFAVLVKHTPGDQDCDELGRETGTRYLVTALIKDKILFKTRPKPIITSVPKKV</sequence>
<keyword id="KW-0131">Cell cycle</keyword>
<keyword id="KW-0235">DNA replication</keyword>
<keyword id="KW-0238">DNA-binding</keyword>
<keyword id="KW-0539">Nucleus</keyword>
<keyword id="KW-1267">Proteomics identification</keyword>
<keyword id="KW-1185">Reference proteome</keyword>
<protein>
    <recommendedName>
        <fullName evidence="5">Chromosome transmission fidelity protein 8 homolog</fullName>
        <shortName evidence="4">hCTF8</shortName>
    </recommendedName>
</protein>
<feature type="chain" id="PRO_0000327253" description="Chromosome transmission fidelity protein 8 homolog">
    <location>
        <begin position="1"/>
        <end position="121"/>
    </location>
</feature>
<reference key="1">
    <citation type="journal article" date="2004" name="Nature">
        <title>The sequence and analysis of duplication-rich human chromosome 16.</title>
        <authorList>
            <person name="Martin J."/>
            <person name="Han C."/>
            <person name="Gordon L.A."/>
            <person name="Terry A."/>
            <person name="Prabhakar S."/>
            <person name="She X."/>
            <person name="Xie G."/>
            <person name="Hellsten U."/>
            <person name="Chan Y.M."/>
            <person name="Altherr M."/>
            <person name="Couronne O."/>
            <person name="Aerts A."/>
            <person name="Bajorek E."/>
            <person name="Black S."/>
            <person name="Blumer H."/>
            <person name="Branscomb E."/>
            <person name="Brown N.C."/>
            <person name="Bruno W.J."/>
            <person name="Buckingham J.M."/>
            <person name="Callen D.F."/>
            <person name="Campbell C.S."/>
            <person name="Campbell M.L."/>
            <person name="Campbell E.W."/>
            <person name="Caoile C."/>
            <person name="Challacombe J.F."/>
            <person name="Chasteen L.A."/>
            <person name="Chertkov O."/>
            <person name="Chi H.C."/>
            <person name="Christensen M."/>
            <person name="Clark L.M."/>
            <person name="Cohn J.D."/>
            <person name="Denys M."/>
            <person name="Detter J.C."/>
            <person name="Dickson M."/>
            <person name="Dimitrijevic-Bussod M."/>
            <person name="Escobar J."/>
            <person name="Fawcett J.J."/>
            <person name="Flowers D."/>
            <person name="Fotopulos D."/>
            <person name="Glavina T."/>
            <person name="Gomez M."/>
            <person name="Gonzales E."/>
            <person name="Goodstein D."/>
            <person name="Goodwin L.A."/>
            <person name="Grady D.L."/>
            <person name="Grigoriev I."/>
            <person name="Groza M."/>
            <person name="Hammon N."/>
            <person name="Hawkins T."/>
            <person name="Haydu L."/>
            <person name="Hildebrand C.E."/>
            <person name="Huang W."/>
            <person name="Israni S."/>
            <person name="Jett J."/>
            <person name="Jewett P.B."/>
            <person name="Kadner K."/>
            <person name="Kimball H."/>
            <person name="Kobayashi A."/>
            <person name="Krawczyk M.-C."/>
            <person name="Leyba T."/>
            <person name="Longmire J.L."/>
            <person name="Lopez F."/>
            <person name="Lou Y."/>
            <person name="Lowry S."/>
            <person name="Ludeman T."/>
            <person name="Manohar C.F."/>
            <person name="Mark G.A."/>
            <person name="McMurray K.L."/>
            <person name="Meincke L.J."/>
            <person name="Morgan J."/>
            <person name="Moyzis R.K."/>
            <person name="Mundt M.O."/>
            <person name="Munk A.C."/>
            <person name="Nandkeshwar R.D."/>
            <person name="Pitluck S."/>
            <person name="Pollard M."/>
            <person name="Predki P."/>
            <person name="Parson-Quintana B."/>
            <person name="Ramirez L."/>
            <person name="Rash S."/>
            <person name="Retterer J."/>
            <person name="Ricke D.O."/>
            <person name="Robinson D.L."/>
            <person name="Rodriguez A."/>
            <person name="Salamov A."/>
            <person name="Saunders E.H."/>
            <person name="Scott D."/>
            <person name="Shough T."/>
            <person name="Stallings R.L."/>
            <person name="Stalvey M."/>
            <person name="Sutherland R.D."/>
            <person name="Tapia R."/>
            <person name="Tesmer J.G."/>
            <person name="Thayer N."/>
            <person name="Thompson L.S."/>
            <person name="Tice H."/>
            <person name="Torney D.C."/>
            <person name="Tran-Gyamfi M."/>
            <person name="Tsai M."/>
            <person name="Ulanovsky L.E."/>
            <person name="Ustaszewska A."/>
            <person name="Vo N."/>
            <person name="White P.S."/>
            <person name="Williams A.L."/>
            <person name="Wills P.L."/>
            <person name="Wu J.-R."/>
            <person name="Wu K."/>
            <person name="Yang J."/>
            <person name="DeJong P."/>
            <person name="Bruce D."/>
            <person name="Doggett N.A."/>
            <person name="Deaven L."/>
            <person name="Schmutz J."/>
            <person name="Grimwood J."/>
            <person name="Richardson P."/>
            <person name="Rokhsar D.S."/>
            <person name="Eichler E.E."/>
            <person name="Gilna P."/>
            <person name="Lucas S.M."/>
            <person name="Myers R.M."/>
            <person name="Rubin E.M."/>
            <person name="Pennacchio L.A."/>
        </authorList>
    </citation>
    <scope>NUCLEOTIDE SEQUENCE [LARGE SCALE GENOMIC DNA]</scope>
</reference>
<reference key="2">
    <citation type="journal article" date="2004" name="Genome Res.">
        <title>The status, quality, and expansion of the NIH full-length cDNA project: the Mammalian Gene Collection (MGC).</title>
        <authorList>
            <consortium name="The MGC Project Team"/>
        </authorList>
    </citation>
    <scope>NUCLEOTIDE SEQUENCE [LARGE SCALE MRNA]</scope>
    <source>
        <tissue>Placenta</tissue>
    </source>
</reference>
<reference key="3">
    <citation type="journal article" date="2003" name="J. Biol. Chem.">
        <title>Cloning and characterization of hCTF18, hCTF8, and hDCC1. Human homologs of a Saccharomyces cerevisiae complex involved in sister chromatid cohesion establishment.</title>
        <authorList>
            <person name="Merkle C.J."/>
            <person name="Karnitz L.M."/>
            <person name="Henry-Sanchez J.T."/>
            <person name="Chen J."/>
        </authorList>
    </citation>
    <scope>IDENTIFICATION IN THE CTF18-RFC COMPLEX</scope>
    <scope>SUBCELLULAR LOCATION</scope>
</reference>
<reference key="4">
    <citation type="journal article" date="2003" name="Proc. Natl. Acad. Sci. U.S.A.">
        <title>The alternative Ctf18-Dcc1-Ctf8-replication factor C complex required for sister chromatid cohesion loads proliferating cell nuclear antigen onto DNA.</title>
        <authorList>
            <person name="Bermudez V.P."/>
            <person name="Maniwa Y."/>
            <person name="Tappin I."/>
            <person name="Ozato K."/>
            <person name="Yokomori K."/>
            <person name="Hurwitz J."/>
        </authorList>
    </citation>
    <scope>FUNCTION</scope>
    <scope>IDENTIFICATION IN THE CTF18-RFC COMPLEX</scope>
    <scope>INTERACTION WITH DSCC1</scope>
    <scope>IDENTIFICATION BY MASS SPECTROMETRY</scope>
</reference>
<reference key="5">
    <citation type="journal article" date="2007" name="J. Biol. Chem.">
        <title>A second proliferating cell nuclear antigen loader complex, Ctf18-replication factor C, stimulates DNA polymerase eta activity.</title>
        <authorList>
            <person name="Shiomi Y."/>
            <person name="Masutani C."/>
            <person name="Hanaoka F."/>
            <person name="Kimura H."/>
            <person name="Tsurimoto T."/>
        </authorList>
    </citation>
    <scope>FUNCTION OF THE CTF18-RFC COMPLEX</scope>
    <scope>INTERACTION OF THE CTF18-RFC COMPLEX WITH POLH</scope>
    <scope>IDENTIFICATION BY MASS SPECTROMETRY</scope>
</reference>
<reference key="6">
    <citation type="journal article" date="2012" name="Proc. Natl. Acad. Sci. U.S.A.">
        <title>N-terminal acetylome analyses and functional insights of the N-terminal acetyltransferase NatB.</title>
        <authorList>
            <person name="Van Damme P."/>
            <person name="Lasa M."/>
            <person name="Polevoda B."/>
            <person name="Gazquez C."/>
            <person name="Elosegui-Artola A."/>
            <person name="Kim D.S."/>
            <person name="De Juan-Pardo E."/>
            <person name="Demeyer K."/>
            <person name="Hole K."/>
            <person name="Larrea E."/>
            <person name="Timmerman E."/>
            <person name="Prieto J."/>
            <person name="Arnesen T."/>
            <person name="Sherman F."/>
            <person name="Gevaert K."/>
            <person name="Aldabe R."/>
        </authorList>
    </citation>
    <scope>IDENTIFICATION BY MASS SPECTROMETRY [LARGE SCALE ANALYSIS]</scope>
</reference>
<dbReference type="EMBL" id="AC009027">
    <property type="status" value="NOT_ANNOTATED_CDS"/>
    <property type="molecule type" value="Genomic_DNA"/>
</dbReference>
<dbReference type="EMBL" id="BC018700">
    <property type="protein sequence ID" value="AAH18700.4"/>
    <property type="molecule type" value="mRNA"/>
</dbReference>
<dbReference type="CCDS" id="CCDS42185.1"/>
<dbReference type="RefSeq" id="NP_001034779.1">
    <property type="nucleotide sequence ID" value="NM_001039690.5"/>
</dbReference>
<dbReference type="RefSeq" id="NP_001035236.1">
    <property type="nucleotide sequence ID" value="NM_001040146.5"/>
</dbReference>
<dbReference type="RefSeq" id="XP_016878859.1">
    <property type="nucleotide sequence ID" value="XM_017023370.1"/>
</dbReference>
<dbReference type="SMR" id="P0CG13"/>
<dbReference type="BioGRID" id="120262">
    <property type="interactions" value="36"/>
</dbReference>
<dbReference type="CORUM" id="P0CG13"/>
<dbReference type="FunCoup" id="P0CG13">
    <property type="interactions" value="2340"/>
</dbReference>
<dbReference type="IntAct" id="P0CG13">
    <property type="interactions" value="10"/>
</dbReference>
<dbReference type="STRING" id="9606.ENSP00000408367"/>
<dbReference type="GlyGen" id="P0CG13">
    <property type="glycosylation" value="3 sites, 1 O-linked glycan (3 sites)"/>
</dbReference>
<dbReference type="iPTMnet" id="P0CG13"/>
<dbReference type="PhosphoSitePlus" id="P0CG13"/>
<dbReference type="BioMuta" id="CHTF8"/>
<dbReference type="DMDM" id="298351632"/>
<dbReference type="jPOST" id="P0CG13"/>
<dbReference type="MassIVE" id="P0CG13"/>
<dbReference type="PaxDb" id="9606-ENSP00000408367"/>
<dbReference type="PeptideAtlas" id="P0CG13"/>
<dbReference type="Pumba" id="P0CG13"/>
<dbReference type="Antibodypedia" id="66354">
    <property type="antibodies" value="13 antibodies from 6 providers"/>
</dbReference>
<dbReference type="DNASU" id="54921"/>
<dbReference type="Ensembl" id="ENST00000398235.6">
    <property type="protein sequence ID" value="ENSP00000381290.2"/>
    <property type="gene ID" value="ENSG00000168802.14"/>
</dbReference>
<dbReference type="Ensembl" id="ENST00000448552.7">
    <property type="protein sequence ID" value="ENSP00000408367.3"/>
    <property type="gene ID" value="ENSG00000168802.14"/>
</dbReference>
<dbReference type="GeneID" id="54921"/>
<dbReference type="KEGG" id="hsa:54921"/>
<dbReference type="MANE-Select" id="ENST00000448552.7">
    <property type="protein sequence ID" value="ENSP00000408367.3"/>
    <property type="RefSeq nucleotide sequence ID" value="NM_001039690.5"/>
    <property type="RefSeq protein sequence ID" value="NP_001034779.1"/>
</dbReference>
<dbReference type="UCSC" id="uc002ewn.3">
    <property type="organism name" value="human"/>
</dbReference>
<dbReference type="AGR" id="HGNC:24353"/>
<dbReference type="CTD" id="54921"/>
<dbReference type="GeneCards" id="CHTF8"/>
<dbReference type="HGNC" id="HGNC:24353">
    <property type="gene designation" value="CHTF8"/>
</dbReference>
<dbReference type="HPA" id="ENSG00000168802">
    <property type="expression patterns" value="Low tissue specificity"/>
</dbReference>
<dbReference type="MIM" id="613202">
    <property type="type" value="gene"/>
</dbReference>
<dbReference type="neXtProt" id="NX_P0CG13"/>
<dbReference type="OpenTargets" id="ENSG00000168802"/>
<dbReference type="PharmGKB" id="PA164717934"/>
<dbReference type="VEuPathDB" id="HostDB:ENSG00000168802"/>
<dbReference type="eggNOG" id="ENOG502S2DB">
    <property type="taxonomic scope" value="Eukaryota"/>
</dbReference>
<dbReference type="GeneTree" id="ENSGT00400000025006"/>
<dbReference type="HOGENOM" id="CLU_066293_3_0_1"/>
<dbReference type="InParanoid" id="P0CG13"/>
<dbReference type="OMA" id="TNVPKPC"/>
<dbReference type="OrthoDB" id="121932at2759"/>
<dbReference type="TreeFam" id="TF314676"/>
<dbReference type="PathwayCommons" id="P0CG13"/>
<dbReference type="Reactome" id="R-HSA-174411">
    <property type="pathway name" value="Polymerase switching on the C-strand of the telomere"/>
</dbReference>
<dbReference type="SignaLink" id="P0CG13"/>
<dbReference type="BioGRID-ORCS" id="54921">
    <property type="hits" value="388 hits in 1166 CRISPR screens"/>
</dbReference>
<dbReference type="ChiTaRS" id="CHTF8">
    <property type="organism name" value="human"/>
</dbReference>
<dbReference type="GeneWiki" id="CTF8"/>
<dbReference type="GenomeRNAi" id="54921"/>
<dbReference type="Pharos" id="P0CG13">
    <property type="development level" value="Tbio"/>
</dbReference>
<dbReference type="PRO" id="PR:P0CG13"/>
<dbReference type="Proteomes" id="UP000005640">
    <property type="component" value="Chromosome 16"/>
</dbReference>
<dbReference type="Bgee" id="ENSG00000168802">
    <property type="expression patterns" value="Expressed in granulocyte and 99 other cell types or tissues"/>
</dbReference>
<dbReference type="ExpressionAtlas" id="P0CG13">
    <property type="expression patterns" value="baseline and differential"/>
</dbReference>
<dbReference type="GO" id="GO:0031390">
    <property type="term" value="C:Ctf18 RFC-like complex"/>
    <property type="evidence" value="ECO:0000314"/>
    <property type="project" value="UniProtKB"/>
</dbReference>
<dbReference type="GO" id="GO:0005654">
    <property type="term" value="C:nucleoplasm"/>
    <property type="evidence" value="ECO:0000304"/>
    <property type="project" value="Reactome"/>
</dbReference>
<dbReference type="GO" id="GO:0003677">
    <property type="term" value="F:DNA binding"/>
    <property type="evidence" value="ECO:0007669"/>
    <property type="project" value="UniProtKB-KW"/>
</dbReference>
<dbReference type="GO" id="GO:0006260">
    <property type="term" value="P:DNA replication"/>
    <property type="evidence" value="ECO:0007669"/>
    <property type="project" value="UniProtKB-KW"/>
</dbReference>
<dbReference type="GO" id="GO:0007064">
    <property type="term" value="P:mitotic sister chromatid cohesion"/>
    <property type="evidence" value="ECO:0007669"/>
    <property type="project" value="InterPro"/>
</dbReference>
<dbReference type="GO" id="GO:1900264">
    <property type="term" value="P:positive regulation of DNA-directed DNA polymerase activity"/>
    <property type="evidence" value="ECO:0000314"/>
    <property type="project" value="UniProtKB"/>
</dbReference>
<dbReference type="InterPro" id="IPR018607">
    <property type="entry name" value="Ctf8"/>
</dbReference>
<dbReference type="PANTHER" id="PTHR28605:SF3">
    <property type="entry name" value="CHROMOSOME TRANSMISSION FIDELITY PROTEIN 8 HOMOLOG"/>
    <property type="match status" value="1"/>
</dbReference>
<dbReference type="PANTHER" id="PTHR28605">
    <property type="entry name" value="CTF8, CHROMOSOME TRANSMISSION FIDELITY FACTOR 8 HOMOLOG (S. CEREVISIAE)"/>
    <property type="match status" value="1"/>
</dbReference>
<dbReference type="Pfam" id="PF09696">
    <property type="entry name" value="Ctf8"/>
    <property type="match status" value="1"/>
</dbReference>
<proteinExistence type="evidence at protein level"/>
<accession>P0CG13</accession>
<accession>A8MYX8</accession>
<accession>Q71E72</accession>
<accession>Q8NDH8</accession>
<accession>Q8WV66</accession>
<accession>Q9NX73</accession>
<evidence type="ECO:0000269" key="1">
    <source>
    </source>
</evidence>
<evidence type="ECO:0000269" key="2">
    <source>
    </source>
</evidence>
<evidence type="ECO:0000269" key="3">
    <source>
    </source>
</evidence>
<evidence type="ECO:0000303" key="4">
    <source>
    </source>
</evidence>
<evidence type="ECO:0000305" key="5"/>
<evidence type="ECO:0000312" key="6">
    <source>
        <dbReference type="HGNC" id="HGNC:24353"/>
    </source>
</evidence>
<gene>
    <name evidence="6" type="primary">CHTF8</name>
    <name type="synonym">CTF8</name>
</gene>
<name>CTF8_HUMAN</name>